<protein>
    <recommendedName>
        <fullName evidence="1">Large ribosomal subunit protein uL1</fullName>
    </recommendedName>
    <alternativeName>
        <fullName evidence="2">50S ribosomal protein L1</fullName>
    </alternativeName>
</protein>
<organism>
    <name type="scientific">Deinococcus geothermalis (strain DSM 11300 / CIP 105573 / AG-3a)</name>
    <dbReference type="NCBI Taxonomy" id="319795"/>
    <lineage>
        <taxon>Bacteria</taxon>
        <taxon>Thermotogati</taxon>
        <taxon>Deinococcota</taxon>
        <taxon>Deinococci</taxon>
        <taxon>Deinococcales</taxon>
        <taxon>Deinococcaceae</taxon>
        <taxon>Deinococcus</taxon>
    </lineage>
</organism>
<evidence type="ECO:0000255" key="1">
    <source>
        <dbReference type="HAMAP-Rule" id="MF_01318"/>
    </source>
</evidence>
<evidence type="ECO:0000305" key="2"/>
<keyword id="KW-0678">Repressor</keyword>
<keyword id="KW-0687">Ribonucleoprotein</keyword>
<keyword id="KW-0689">Ribosomal protein</keyword>
<keyword id="KW-0694">RNA-binding</keyword>
<keyword id="KW-0699">rRNA-binding</keyword>
<keyword id="KW-0810">Translation regulation</keyword>
<keyword id="KW-0820">tRNA-binding</keyword>
<gene>
    <name evidence="1" type="primary">rplA</name>
    <name type="ordered locus">Dgeo_0641</name>
</gene>
<proteinExistence type="inferred from homology"/>
<comment type="function">
    <text evidence="1">Binds directly to 23S rRNA. The L1 stalk is quite mobile in the ribosome, and is involved in E site tRNA release.</text>
</comment>
<comment type="function">
    <text evidence="1">Protein L1 is also a translational repressor protein, it controls the translation of the L11 operon by binding to its mRNA.</text>
</comment>
<comment type="subunit">
    <text evidence="1">Part of the 50S ribosomal subunit.</text>
</comment>
<comment type="similarity">
    <text evidence="1">Belongs to the universal ribosomal protein uL1 family.</text>
</comment>
<feature type="chain" id="PRO_0000307999" description="Large ribosomal subunit protein uL1">
    <location>
        <begin position="1"/>
        <end position="233"/>
    </location>
</feature>
<accession>Q1J0P1</accession>
<name>RL1_DEIGD</name>
<sequence length="233" mass="24584">MPKHGKRYRALIEKVDRNRQYSIDEAAALVKDLATAKFDETVEVHFRLGIDPRKSDQNVRGTVALPHGTGKTVRVAVITKGDNVAAAEAAGADVVGGEDLIDRIANGFMDFDAVVATPDMMAQIGQKLARLLGPRGLLPNPKSGTVGPDVAGMVRGLKAGRIEFRNDKTGVVHAPIGKASFDPSNLSANYRALLSALEAAKPAAAKGVYLRSAYLTSTMGPSIPLTLSAQAQA</sequence>
<reference key="1">
    <citation type="submission" date="2006-04" db="EMBL/GenBank/DDBJ databases">
        <title>Complete sequence of chromosome of Deinococcus geothermalis DSM 11300.</title>
        <authorList>
            <person name="Copeland A."/>
            <person name="Lucas S."/>
            <person name="Lapidus A."/>
            <person name="Barry K."/>
            <person name="Detter J.C."/>
            <person name="Glavina del Rio T."/>
            <person name="Hammon N."/>
            <person name="Israni S."/>
            <person name="Dalin E."/>
            <person name="Tice H."/>
            <person name="Pitluck S."/>
            <person name="Brettin T."/>
            <person name="Bruce D."/>
            <person name="Han C."/>
            <person name="Tapia R."/>
            <person name="Saunders E."/>
            <person name="Gilna P."/>
            <person name="Schmutz J."/>
            <person name="Larimer F."/>
            <person name="Land M."/>
            <person name="Hauser L."/>
            <person name="Kyrpides N."/>
            <person name="Kim E."/>
            <person name="Daly M.J."/>
            <person name="Fredrickson J.K."/>
            <person name="Makarova K.S."/>
            <person name="Gaidamakova E.K."/>
            <person name="Zhai M."/>
            <person name="Richardson P."/>
        </authorList>
    </citation>
    <scope>NUCLEOTIDE SEQUENCE [LARGE SCALE GENOMIC DNA]</scope>
    <source>
        <strain>DSM 11300 / CIP 105573 / AG-3a</strain>
    </source>
</reference>
<dbReference type="EMBL" id="CP000359">
    <property type="protein sequence ID" value="ABF44943.1"/>
    <property type="molecule type" value="Genomic_DNA"/>
</dbReference>
<dbReference type="RefSeq" id="WP_011529784.1">
    <property type="nucleotide sequence ID" value="NC_008025.1"/>
</dbReference>
<dbReference type="SMR" id="Q1J0P1"/>
<dbReference type="STRING" id="319795.Dgeo_0641"/>
<dbReference type="KEGG" id="dge:Dgeo_0641"/>
<dbReference type="eggNOG" id="COG0081">
    <property type="taxonomic scope" value="Bacteria"/>
</dbReference>
<dbReference type="HOGENOM" id="CLU_062853_0_0_0"/>
<dbReference type="Proteomes" id="UP000002431">
    <property type="component" value="Chromosome"/>
</dbReference>
<dbReference type="GO" id="GO:0015934">
    <property type="term" value="C:large ribosomal subunit"/>
    <property type="evidence" value="ECO:0007669"/>
    <property type="project" value="InterPro"/>
</dbReference>
<dbReference type="GO" id="GO:0019843">
    <property type="term" value="F:rRNA binding"/>
    <property type="evidence" value="ECO:0007669"/>
    <property type="project" value="UniProtKB-UniRule"/>
</dbReference>
<dbReference type="GO" id="GO:0003735">
    <property type="term" value="F:structural constituent of ribosome"/>
    <property type="evidence" value="ECO:0007669"/>
    <property type="project" value="InterPro"/>
</dbReference>
<dbReference type="GO" id="GO:0000049">
    <property type="term" value="F:tRNA binding"/>
    <property type="evidence" value="ECO:0007669"/>
    <property type="project" value="UniProtKB-KW"/>
</dbReference>
<dbReference type="GO" id="GO:0006417">
    <property type="term" value="P:regulation of translation"/>
    <property type="evidence" value="ECO:0007669"/>
    <property type="project" value="UniProtKB-KW"/>
</dbReference>
<dbReference type="GO" id="GO:0006412">
    <property type="term" value="P:translation"/>
    <property type="evidence" value="ECO:0007669"/>
    <property type="project" value="UniProtKB-UniRule"/>
</dbReference>
<dbReference type="CDD" id="cd00403">
    <property type="entry name" value="Ribosomal_L1"/>
    <property type="match status" value="1"/>
</dbReference>
<dbReference type="FunFam" id="3.40.50.790:FF:000001">
    <property type="entry name" value="50S ribosomal protein L1"/>
    <property type="match status" value="1"/>
</dbReference>
<dbReference type="Gene3D" id="3.30.190.20">
    <property type="match status" value="1"/>
</dbReference>
<dbReference type="Gene3D" id="3.40.50.790">
    <property type="match status" value="1"/>
</dbReference>
<dbReference type="HAMAP" id="MF_01318_B">
    <property type="entry name" value="Ribosomal_uL1_B"/>
    <property type="match status" value="1"/>
</dbReference>
<dbReference type="InterPro" id="IPR005878">
    <property type="entry name" value="Ribosom_uL1_bac-type"/>
</dbReference>
<dbReference type="InterPro" id="IPR002143">
    <property type="entry name" value="Ribosomal_uL1"/>
</dbReference>
<dbReference type="InterPro" id="IPR023674">
    <property type="entry name" value="Ribosomal_uL1-like"/>
</dbReference>
<dbReference type="InterPro" id="IPR028364">
    <property type="entry name" value="Ribosomal_uL1/biogenesis"/>
</dbReference>
<dbReference type="InterPro" id="IPR016095">
    <property type="entry name" value="Ribosomal_uL1_3-a/b-sand"/>
</dbReference>
<dbReference type="InterPro" id="IPR023673">
    <property type="entry name" value="Ribosomal_uL1_CS"/>
</dbReference>
<dbReference type="NCBIfam" id="TIGR01169">
    <property type="entry name" value="rplA_bact"/>
    <property type="match status" value="1"/>
</dbReference>
<dbReference type="PANTHER" id="PTHR36427">
    <property type="entry name" value="54S RIBOSOMAL PROTEIN L1, MITOCHONDRIAL"/>
    <property type="match status" value="1"/>
</dbReference>
<dbReference type="PANTHER" id="PTHR36427:SF3">
    <property type="entry name" value="LARGE RIBOSOMAL SUBUNIT PROTEIN UL1M"/>
    <property type="match status" value="1"/>
</dbReference>
<dbReference type="Pfam" id="PF00687">
    <property type="entry name" value="Ribosomal_L1"/>
    <property type="match status" value="1"/>
</dbReference>
<dbReference type="PIRSF" id="PIRSF002155">
    <property type="entry name" value="Ribosomal_L1"/>
    <property type="match status" value="1"/>
</dbReference>
<dbReference type="SUPFAM" id="SSF56808">
    <property type="entry name" value="Ribosomal protein L1"/>
    <property type="match status" value="1"/>
</dbReference>
<dbReference type="PROSITE" id="PS01199">
    <property type="entry name" value="RIBOSOMAL_L1"/>
    <property type="match status" value="1"/>
</dbReference>